<comment type="catalytic activity">
    <reaction evidence="1">
        <text>D-arabinose 5-phosphate + phosphoenolpyruvate + H2O = 3-deoxy-alpha-D-manno-2-octulosonate-8-phosphate + phosphate</text>
        <dbReference type="Rhea" id="RHEA:14053"/>
        <dbReference type="ChEBI" id="CHEBI:15377"/>
        <dbReference type="ChEBI" id="CHEBI:43474"/>
        <dbReference type="ChEBI" id="CHEBI:57693"/>
        <dbReference type="ChEBI" id="CHEBI:58702"/>
        <dbReference type="ChEBI" id="CHEBI:85985"/>
        <dbReference type="EC" id="2.5.1.55"/>
    </reaction>
</comment>
<comment type="pathway">
    <text evidence="1">Carbohydrate biosynthesis; 3-deoxy-D-manno-octulosonate biosynthesis; 3-deoxy-D-manno-octulosonate from D-ribulose 5-phosphate: step 2/3.</text>
</comment>
<comment type="pathway">
    <text evidence="1">Bacterial outer membrane biogenesis; lipopolysaccharide biosynthesis.</text>
</comment>
<comment type="subcellular location">
    <subcellularLocation>
        <location evidence="1">Cytoplasm</location>
    </subcellularLocation>
</comment>
<comment type="similarity">
    <text evidence="1">Belongs to the KdsA family.</text>
</comment>
<name>KDSA_CHRVO</name>
<reference key="1">
    <citation type="journal article" date="2003" name="Proc. Natl. Acad. Sci. U.S.A.">
        <title>The complete genome sequence of Chromobacterium violaceum reveals remarkable and exploitable bacterial adaptability.</title>
        <authorList>
            <person name="Vasconcelos A.T.R."/>
            <person name="de Almeida D.F."/>
            <person name="Hungria M."/>
            <person name="Guimaraes C.T."/>
            <person name="Antonio R.V."/>
            <person name="Almeida F.C."/>
            <person name="de Almeida L.G.P."/>
            <person name="de Almeida R."/>
            <person name="Alves-Gomes J.A."/>
            <person name="Andrade E.M."/>
            <person name="Araripe J."/>
            <person name="de Araujo M.F.F."/>
            <person name="Astolfi-Filho S."/>
            <person name="Azevedo V."/>
            <person name="Baptista A.J."/>
            <person name="Bataus L.A.M."/>
            <person name="Batista J.S."/>
            <person name="Belo A."/>
            <person name="van den Berg C."/>
            <person name="Bogo M."/>
            <person name="Bonatto S."/>
            <person name="Bordignon J."/>
            <person name="Brigido M.M."/>
            <person name="Brito C.A."/>
            <person name="Brocchi M."/>
            <person name="Burity H.A."/>
            <person name="Camargo A.A."/>
            <person name="Cardoso D.D.P."/>
            <person name="Carneiro N.P."/>
            <person name="Carraro D.M."/>
            <person name="Carvalho C.M.B."/>
            <person name="Cascardo J.C.M."/>
            <person name="Cavada B.S."/>
            <person name="Chueire L.M.O."/>
            <person name="Creczynski-Pasa T.B."/>
            <person name="Cunha-Junior N.C."/>
            <person name="Fagundes N."/>
            <person name="Falcao C.L."/>
            <person name="Fantinatti F."/>
            <person name="Farias I.P."/>
            <person name="Felipe M.S.S."/>
            <person name="Ferrari L.P."/>
            <person name="Ferro J.A."/>
            <person name="Ferro M.I.T."/>
            <person name="Franco G.R."/>
            <person name="Freitas N.S.A."/>
            <person name="Furlan L.R."/>
            <person name="Gazzinelli R.T."/>
            <person name="Gomes E.A."/>
            <person name="Goncalves P.R."/>
            <person name="Grangeiro T.B."/>
            <person name="Grattapaglia D."/>
            <person name="Grisard E.C."/>
            <person name="Hanna E.S."/>
            <person name="Jardim S.N."/>
            <person name="Laurino J."/>
            <person name="Leoi L.C.T."/>
            <person name="Lima L.F.A."/>
            <person name="Loureiro M.F."/>
            <person name="Lyra M.C.C.P."/>
            <person name="Madeira H.M.F."/>
            <person name="Manfio G.P."/>
            <person name="Maranhao A.Q."/>
            <person name="Martins W.S."/>
            <person name="di Mauro S.M.Z."/>
            <person name="de Medeiros S.R.B."/>
            <person name="Meissner R.V."/>
            <person name="Moreira M.A.M."/>
            <person name="Nascimento F.F."/>
            <person name="Nicolas M.F."/>
            <person name="Oliveira J.G."/>
            <person name="Oliveira S.C."/>
            <person name="Paixao R.F.C."/>
            <person name="Parente J.A."/>
            <person name="Pedrosa F.O."/>
            <person name="Pena S.D.J."/>
            <person name="Pereira J.O."/>
            <person name="Pereira M."/>
            <person name="Pinto L.S.R.C."/>
            <person name="Pinto L.S."/>
            <person name="Porto J.I.R."/>
            <person name="Potrich D.P."/>
            <person name="Ramalho-Neto C.E."/>
            <person name="Reis A.M.M."/>
            <person name="Rigo L.U."/>
            <person name="Rondinelli E."/>
            <person name="Santos E.B.P."/>
            <person name="Santos F.R."/>
            <person name="Schneider M.P.C."/>
            <person name="Seuanez H.N."/>
            <person name="Silva A.M.R."/>
            <person name="da Silva A.L.C."/>
            <person name="Silva D.W."/>
            <person name="Silva R."/>
            <person name="Simoes I.C."/>
            <person name="Simon D."/>
            <person name="Soares C.M.A."/>
            <person name="Soares R.B.A."/>
            <person name="Souza E.M."/>
            <person name="Souza K.R.L."/>
            <person name="Souza R.C."/>
            <person name="Steffens M.B.R."/>
            <person name="Steindel M."/>
            <person name="Teixeira S.R."/>
            <person name="Urmenyi T."/>
            <person name="Vettore A."/>
            <person name="Wassem R."/>
            <person name="Zaha A."/>
            <person name="Simpson A.J.G."/>
        </authorList>
    </citation>
    <scope>NUCLEOTIDE SEQUENCE [LARGE SCALE GENOMIC DNA]</scope>
    <source>
        <strain>ATCC 12472 / DSM 30191 / JCM 1249 / CCUG 213 / NBRC 12614 / NCIMB 9131 / NCTC 9757 / MK</strain>
    </source>
</reference>
<feature type="chain" id="PRO_0000187120" description="2-dehydro-3-deoxyphosphooctonate aldolase">
    <location>
        <begin position="1"/>
        <end position="282"/>
    </location>
</feature>
<organism>
    <name type="scientific">Chromobacterium violaceum (strain ATCC 12472 / DSM 30191 / JCM 1249 / CCUG 213 / NBRC 12614 / NCIMB 9131 / NCTC 9757 / MK)</name>
    <dbReference type="NCBI Taxonomy" id="243365"/>
    <lineage>
        <taxon>Bacteria</taxon>
        <taxon>Pseudomonadati</taxon>
        <taxon>Pseudomonadota</taxon>
        <taxon>Betaproteobacteria</taxon>
        <taxon>Neisseriales</taxon>
        <taxon>Chromobacteriaceae</taxon>
        <taxon>Chromobacterium</taxon>
    </lineage>
</organism>
<protein>
    <recommendedName>
        <fullName evidence="1">2-dehydro-3-deoxyphosphooctonate aldolase</fullName>
        <ecNumber evidence="1">2.5.1.55</ecNumber>
    </recommendedName>
    <alternativeName>
        <fullName evidence="1">3-deoxy-D-manno-octulosonic acid 8-phosphate synthase</fullName>
    </alternativeName>
    <alternativeName>
        <fullName evidence="1">KDO-8-phosphate synthase</fullName>
        <shortName evidence="1">KDO 8-P synthase</shortName>
        <shortName evidence="1">KDOPS</shortName>
    </alternativeName>
    <alternativeName>
        <fullName evidence="1">Phospho-2-dehydro-3-deoxyoctonate aldolase</fullName>
    </alternativeName>
</protein>
<dbReference type="EC" id="2.5.1.55" evidence="1"/>
<dbReference type="EMBL" id="AE016825">
    <property type="protein sequence ID" value="AAQ60416.1"/>
    <property type="molecule type" value="Genomic_DNA"/>
</dbReference>
<dbReference type="RefSeq" id="WP_011136294.1">
    <property type="nucleotide sequence ID" value="NC_005085.1"/>
</dbReference>
<dbReference type="SMR" id="Q7NUF2"/>
<dbReference type="STRING" id="243365.CV_2747"/>
<dbReference type="KEGG" id="cvi:CV_2747"/>
<dbReference type="eggNOG" id="COG2877">
    <property type="taxonomic scope" value="Bacteria"/>
</dbReference>
<dbReference type="HOGENOM" id="CLU_036666_0_0_4"/>
<dbReference type="OrthoDB" id="9776934at2"/>
<dbReference type="UniPathway" id="UPA00030"/>
<dbReference type="UniPathway" id="UPA00357">
    <property type="reaction ID" value="UER00474"/>
</dbReference>
<dbReference type="Proteomes" id="UP000001424">
    <property type="component" value="Chromosome"/>
</dbReference>
<dbReference type="GO" id="GO:0005737">
    <property type="term" value="C:cytoplasm"/>
    <property type="evidence" value="ECO:0007669"/>
    <property type="project" value="UniProtKB-SubCell"/>
</dbReference>
<dbReference type="GO" id="GO:0008676">
    <property type="term" value="F:3-deoxy-8-phosphooctulonate synthase activity"/>
    <property type="evidence" value="ECO:0007669"/>
    <property type="project" value="UniProtKB-UniRule"/>
</dbReference>
<dbReference type="GO" id="GO:0019294">
    <property type="term" value="P:keto-3-deoxy-D-manno-octulosonic acid biosynthetic process"/>
    <property type="evidence" value="ECO:0007669"/>
    <property type="project" value="UniProtKB-UniRule"/>
</dbReference>
<dbReference type="Gene3D" id="3.20.20.70">
    <property type="entry name" value="Aldolase class I"/>
    <property type="match status" value="1"/>
</dbReference>
<dbReference type="HAMAP" id="MF_00056">
    <property type="entry name" value="KDO8P_synth"/>
    <property type="match status" value="1"/>
</dbReference>
<dbReference type="InterPro" id="IPR013785">
    <property type="entry name" value="Aldolase_TIM"/>
</dbReference>
<dbReference type="InterPro" id="IPR006218">
    <property type="entry name" value="DAHP1/KDSA"/>
</dbReference>
<dbReference type="InterPro" id="IPR006269">
    <property type="entry name" value="KDO8P_synthase"/>
</dbReference>
<dbReference type="NCBIfam" id="TIGR01362">
    <property type="entry name" value="KDO8P_synth"/>
    <property type="match status" value="1"/>
</dbReference>
<dbReference type="NCBIfam" id="NF003543">
    <property type="entry name" value="PRK05198.1"/>
    <property type="match status" value="1"/>
</dbReference>
<dbReference type="NCBIfam" id="NF009109">
    <property type="entry name" value="PRK12457.1"/>
    <property type="match status" value="1"/>
</dbReference>
<dbReference type="PANTHER" id="PTHR21057">
    <property type="entry name" value="PHOSPHO-2-DEHYDRO-3-DEOXYHEPTONATE ALDOLASE"/>
    <property type="match status" value="1"/>
</dbReference>
<dbReference type="Pfam" id="PF00793">
    <property type="entry name" value="DAHP_synth_1"/>
    <property type="match status" value="1"/>
</dbReference>
<dbReference type="SUPFAM" id="SSF51569">
    <property type="entry name" value="Aldolase"/>
    <property type="match status" value="1"/>
</dbReference>
<proteinExistence type="inferred from homology"/>
<evidence type="ECO:0000255" key="1">
    <source>
        <dbReference type="HAMAP-Rule" id="MF_00056"/>
    </source>
</evidence>
<accession>Q7NUF2</accession>
<keyword id="KW-0963">Cytoplasm</keyword>
<keyword id="KW-0448">Lipopolysaccharide biosynthesis</keyword>
<keyword id="KW-1185">Reference proteome</keyword>
<keyword id="KW-0808">Transferase</keyword>
<sequence>MINVTLSPSVTVGNEAPFTLFGGINVLESRDLALRAAEEYVRVTQKLGIPYVFKGSFDKANRSSIHSYRGPGLEEGMKILQAVKDTFGVPVITDVHEPWQAAPVAEVADVVQLPAFLARQTDLVEALAKTGRAVNIKKPQFMSPAQIQNVVEKFVEAGNEQLILCDRGTCLGYDNLVVDMLGFGVMKKVSGNRPVIFDVTHSLQQRESGAAASGGRRAQVAELARAGMAVGLAGLFLEAHPNPAEAKCDGPSALPLAQLEPFLAQVKAIDDLVKSFAPLQID</sequence>
<gene>
    <name evidence="1" type="primary">kdsA</name>
    <name type="ordered locus">CV_2747</name>
</gene>